<feature type="chain" id="PRO_0000406121" description="GDP-mannose transporter GONST2">
    <location>
        <begin position="1"/>
        <end position="375"/>
    </location>
</feature>
<feature type="transmembrane region" description="Helical" evidence="1">
    <location>
        <begin position="79"/>
        <end position="99"/>
    </location>
</feature>
<feature type="transmembrane region" description="Helical" evidence="1">
    <location>
        <begin position="112"/>
        <end position="132"/>
    </location>
</feature>
<feature type="transmembrane region" description="Helical" evidence="1">
    <location>
        <begin position="141"/>
        <end position="161"/>
    </location>
</feature>
<feature type="transmembrane region" description="Helical" evidence="1">
    <location>
        <begin position="165"/>
        <end position="185"/>
    </location>
</feature>
<feature type="transmembrane region" description="Helical" evidence="1">
    <location>
        <begin position="199"/>
        <end position="219"/>
    </location>
</feature>
<feature type="transmembrane region" description="Helical" evidence="1">
    <location>
        <begin position="262"/>
        <end position="282"/>
    </location>
</feature>
<feature type="transmembrane region" description="Helical" evidence="1">
    <location>
        <begin position="300"/>
        <end position="320"/>
    </location>
</feature>
<feature type="transmembrane region" description="Helical" evidence="1">
    <location>
        <begin position="327"/>
        <end position="347"/>
    </location>
</feature>
<feature type="transmembrane region" description="Helical" evidence="1">
    <location>
        <begin position="349"/>
        <end position="369"/>
    </location>
</feature>
<gene>
    <name evidence="9" type="primary">GONST2</name>
    <name evidence="7" type="ordered locus">At1g07290</name>
    <name evidence="8" type="ORF">F22G5.37</name>
</gene>
<sequence>MSAVKLEAIVCHEPDESELSHLSDNGSKTKNGVVFQLLDQKSSEHRWFSERFLRWRRRYLPVDGDNRRDHGSVKQSGPLVSGAAYCISSCSMIILNKIVLSSYNFNAGVSLMLYQNLISCLVVAVLDISGVVSVEKFNWKLIRVWMPVNVIFVGMLVSGMYSLKYINVAMVTILKNATNILTGIGEVYMFRKRQNNKVWAAMFMMIISAISGGITDLTFDAVGYTWQLANCFLTASYSLTLRRVMDKAKQSTKSGSLNEVSMVLLNNLLSIPFGIILIILLGEWRYVISTDVTKDSMFWVVATASGFLGLAISFTSMWFLHQTGPTTYSLVGSLNKVPISLAGLVLFNVPLSLPNLFSILFGLFAGVVFARAKMS</sequence>
<accession>Q84L09</accession>
<accession>Q9LNU8</accession>
<evidence type="ECO:0000255" key="1"/>
<evidence type="ECO:0000269" key="2">
    <source>
    </source>
</evidence>
<evidence type="ECO:0000269" key="3">
    <source>
    </source>
</evidence>
<evidence type="ECO:0000269" key="4">
    <source>
    </source>
</evidence>
<evidence type="ECO:0000303" key="5">
    <source>
    </source>
</evidence>
<evidence type="ECO:0000305" key="6"/>
<evidence type="ECO:0000312" key="7">
    <source>
        <dbReference type="Araport" id="AT1G07290"/>
    </source>
</evidence>
<evidence type="ECO:0000312" key="8">
    <source>
        <dbReference type="EMBL" id="AAF79561.1"/>
    </source>
</evidence>
<evidence type="ECO:0000312" key="9">
    <source>
        <dbReference type="EMBL" id="CAD83086.1"/>
    </source>
</evidence>
<name>GONS2_ARATH</name>
<protein>
    <recommendedName>
        <fullName evidence="5">GDP-mannose transporter GONST2</fullName>
    </recommendedName>
    <alternativeName>
        <fullName evidence="5">Protein GOLGI NUCLEOTIDE SUGAR TRANSPORTER 2</fullName>
    </alternativeName>
</protein>
<dbReference type="EMBL" id="AJ551325">
    <property type="protein sequence ID" value="CAD83086.1"/>
    <property type="molecule type" value="mRNA"/>
</dbReference>
<dbReference type="EMBL" id="AC022464">
    <property type="protein sequence ID" value="AAF79561.1"/>
    <property type="status" value="ALT_SEQ"/>
    <property type="molecule type" value="Genomic_DNA"/>
</dbReference>
<dbReference type="EMBL" id="CP002684">
    <property type="status" value="NOT_ANNOTATED_CDS"/>
    <property type="molecule type" value="Genomic_DNA"/>
</dbReference>
<dbReference type="SMR" id="Q84L09"/>
<dbReference type="FunCoup" id="Q84L09">
    <property type="interactions" value="851"/>
</dbReference>
<dbReference type="STRING" id="3702.Q84L09"/>
<dbReference type="TCDB" id="2.A.7.13.4">
    <property type="family name" value="the drug/metabolite transporter (dmt) superfamily"/>
</dbReference>
<dbReference type="PaxDb" id="3702-AT1G07290.1"/>
<dbReference type="ProteomicsDB" id="248445"/>
<dbReference type="Araport" id="AT1G07290"/>
<dbReference type="TAIR" id="AT1G07290">
    <property type="gene designation" value="GONST2"/>
</dbReference>
<dbReference type="eggNOG" id="KOG1444">
    <property type="taxonomic scope" value="Eukaryota"/>
</dbReference>
<dbReference type="HOGENOM" id="CLU_738864_0_0_1"/>
<dbReference type="InParanoid" id="Q84L09"/>
<dbReference type="OrthoDB" id="417037at2759"/>
<dbReference type="PhylomeDB" id="Q84L09"/>
<dbReference type="PRO" id="PR:Q84L09"/>
<dbReference type="Proteomes" id="UP000006548">
    <property type="component" value="Chromosome 1"/>
</dbReference>
<dbReference type="ExpressionAtlas" id="Q84L09">
    <property type="expression patterns" value="baseline and differential"/>
</dbReference>
<dbReference type="GO" id="GO:0005794">
    <property type="term" value="C:Golgi apparatus"/>
    <property type="evidence" value="ECO:0000318"/>
    <property type="project" value="GO_Central"/>
</dbReference>
<dbReference type="GO" id="GO:0000139">
    <property type="term" value="C:Golgi membrane"/>
    <property type="evidence" value="ECO:0007669"/>
    <property type="project" value="UniProtKB-SubCell"/>
</dbReference>
<dbReference type="GO" id="GO:0015297">
    <property type="term" value="F:antiporter activity"/>
    <property type="evidence" value="ECO:0000318"/>
    <property type="project" value="GO_Central"/>
</dbReference>
<dbReference type="GO" id="GO:0005458">
    <property type="term" value="F:GDP-mannose transmembrane transporter activity"/>
    <property type="evidence" value="ECO:0000318"/>
    <property type="project" value="GO_Central"/>
</dbReference>
<dbReference type="GO" id="GO:1990570">
    <property type="term" value="P:GDP-mannose transmembrane transport"/>
    <property type="evidence" value="ECO:0000316"/>
    <property type="project" value="TAIR"/>
</dbReference>
<dbReference type="GO" id="GO:0015780">
    <property type="term" value="P:nucleotide-sugar transmembrane transport"/>
    <property type="evidence" value="ECO:0000316"/>
    <property type="project" value="TAIR"/>
</dbReference>
<dbReference type="InterPro" id="IPR004853">
    <property type="entry name" value="Sugar_P_trans_dom"/>
</dbReference>
<dbReference type="InterPro" id="IPR050186">
    <property type="entry name" value="TPT_transporter"/>
</dbReference>
<dbReference type="PANTHER" id="PTHR11132">
    <property type="entry name" value="SOLUTE CARRIER FAMILY 35"/>
    <property type="match status" value="1"/>
</dbReference>
<dbReference type="Pfam" id="PF03151">
    <property type="entry name" value="TPT"/>
    <property type="match status" value="1"/>
</dbReference>
<comment type="function">
    <text evidence="2">GDP-mannose transporter that may be involved in the import of GDP-mannose from the cytoplasm into the Golgi lumen.</text>
</comment>
<comment type="subcellular location">
    <subcellularLocation>
        <location evidence="4">Golgi apparatus membrane</location>
        <topology evidence="1">Multi-pass membrane protein</topology>
    </subcellularLocation>
</comment>
<comment type="tissue specificity">
    <text evidence="2">Expressed in rosette leaves, stems, flowers and siliques.</text>
</comment>
<comment type="disruption phenotype">
    <text evidence="3">No visible phenotype.</text>
</comment>
<comment type="similarity">
    <text evidence="6">Belongs to the nucleotide-sugar transporter family. GDP-Mannose:GMP antiporter (GMA) (TC 2.A.7.13) subfamily.</text>
</comment>
<comment type="sequence caution" evidence="6">
    <conflict type="erroneous gene model prediction">
        <sequence resource="EMBL-CDS" id="AAF79561"/>
    </conflict>
</comment>
<proteinExistence type="evidence at transcript level"/>
<keyword id="KW-0050">Antiport</keyword>
<keyword id="KW-0333">Golgi apparatus</keyword>
<keyword id="KW-0472">Membrane</keyword>
<keyword id="KW-1185">Reference proteome</keyword>
<keyword id="KW-0762">Sugar transport</keyword>
<keyword id="KW-0812">Transmembrane</keyword>
<keyword id="KW-1133">Transmembrane helix</keyword>
<keyword id="KW-0813">Transport</keyword>
<reference key="1">
    <citation type="journal article" date="2004" name="Mol. Genet. Genomics">
        <title>Arabidopsis thaliana expresses multiple Golgi-localised nucleotide-sugar transporters related to GONST1.</title>
        <authorList>
            <person name="Handford M.G."/>
            <person name="Sicilia F."/>
            <person name="Brandizzi F."/>
            <person name="Chung J.H."/>
            <person name="Dupree P."/>
        </authorList>
    </citation>
    <scope>NUCLEOTIDE SEQUENCE [MRNA]</scope>
    <scope>FUNCTION</scope>
    <scope>TISSUE SPECIFICITY</scope>
    <source>
        <strain>cv. Columbia</strain>
    </source>
</reference>
<reference key="2">
    <citation type="journal article" date="2000" name="Nature">
        <title>Sequence and analysis of chromosome 1 of the plant Arabidopsis thaliana.</title>
        <authorList>
            <person name="Theologis A."/>
            <person name="Ecker J.R."/>
            <person name="Palm C.J."/>
            <person name="Federspiel N.A."/>
            <person name="Kaul S."/>
            <person name="White O."/>
            <person name="Alonso J."/>
            <person name="Altafi H."/>
            <person name="Araujo R."/>
            <person name="Bowman C.L."/>
            <person name="Brooks S.Y."/>
            <person name="Buehler E."/>
            <person name="Chan A."/>
            <person name="Chao Q."/>
            <person name="Chen H."/>
            <person name="Cheuk R.F."/>
            <person name="Chin C.W."/>
            <person name="Chung M.K."/>
            <person name="Conn L."/>
            <person name="Conway A.B."/>
            <person name="Conway A.R."/>
            <person name="Creasy T.H."/>
            <person name="Dewar K."/>
            <person name="Dunn P."/>
            <person name="Etgu P."/>
            <person name="Feldblyum T.V."/>
            <person name="Feng J.-D."/>
            <person name="Fong B."/>
            <person name="Fujii C.Y."/>
            <person name="Gill J.E."/>
            <person name="Goldsmith A.D."/>
            <person name="Haas B."/>
            <person name="Hansen N.F."/>
            <person name="Hughes B."/>
            <person name="Huizar L."/>
            <person name="Hunter J.L."/>
            <person name="Jenkins J."/>
            <person name="Johnson-Hopson C."/>
            <person name="Khan S."/>
            <person name="Khaykin E."/>
            <person name="Kim C.J."/>
            <person name="Koo H.L."/>
            <person name="Kremenetskaia I."/>
            <person name="Kurtz D.B."/>
            <person name="Kwan A."/>
            <person name="Lam B."/>
            <person name="Langin-Hooper S."/>
            <person name="Lee A."/>
            <person name="Lee J.M."/>
            <person name="Lenz C.A."/>
            <person name="Li J.H."/>
            <person name="Li Y.-P."/>
            <person name="Lin X."/>
            <person name="Liu S.X."/>
            <person name="Liu Z.A."/>
            <person name="Luros J.S."/>
            <person name="Maiti R."/>
            <person name="Marziali A."/>
            <person name="Militscher J."/>
            <person name="Miranda M."/>
            <person name="Nguyen M."/>
            <person name="Nierman W.C."/>
            <person name="Osborne B.I."/>
            <person name="Pai G."/>
            <person name="Peterson J."/>
            <person name="Pham P.K."/>
            <person name="Rizzo M."/>
            <person name="Rooney T."/>
            <person name="Rowley D."/>
            <person name="Sakano H."/>
            <person name="Salzberg S.L."/>
            <person name="Schwartz J.R."/>
            <person name="Shinn P."/>
            <person name="Southwick A.M."/>
            <person name="Sun H."/>
            <person name="Tallon L.J."/>
            <person name="Tambunga G."/>
            <person name="Toriumi M.J."/>
            <person name="Town C.D."/>
            <person name="Utterback T."/>
            <person name="Van Aken S."/>
            <person name="Vaysberg M."/>
            <person name="Vysotskaia V.S."/>
            <person name="Walker M."/>
            <person name="Wu D."/>
            <person name="Yu G."/>
            <person name="Fraser C.M."/>
            <person name="Venter J.C."/>
            <person name="Davis R.W."/>
        </authorList>
    </citation>
    <scope>NUCLEOTIDE SEQUENCE [LARGE SCALE GENOMIC DNA]</scope>
    <source>
        <strain>cv. Columbia</strain>
    </source>
</reference>
<reference key="3">
    <citation type="journal article" date="2017" name="Plant J.">
        <title>Araport11: a complete reannotation of the Arabidopsis thaliana reference genome.</title>
        <authorList>
            <person name="Cheng C.Y."/>
            <person name="Krishnakumar V."/>
            <person name="Chan A.P."/>
            <person name="Thibaud-Nissen F."/>
            <person name="Schobel S."/>
            <person name="Town C.D."/>
        </authorList>
    </citation>
    <scope>GENOME REANNOTATION</scope>
    <source>
        <strain>cv. Columbia</strain>
    </source>
</reference>
<reference key="4">
    <citation type="journal article" date="2013" name="Plant Cell">
        <title>Abnormal glycosphingolipid mannosylation triggers salicylic acid-mediated responses in Arabidopsis.</title>
        <authorList>
            <person name="Mortimer J.C."/>
            <person name="Yu X."/>
            <person name="Albrecht S."/>
            <person name="Sicilia F."/>
            <person name="Huichalaf M."/>
            <person name="Ampuero D."/>
            <person name="Michaelson L.V."/>
            <person name="Murphy A.M."/>
            <person name="Matsunaga T."/>
            <person name="Kurz S."/>
            <person name="Stephens E."/>
            <person name="Baldwin T.C."/>
            <person name="Ishii T."/>
            <person name="Napier J.A."/>
            <person name="Weber A.P."/>
            <person name="Handford M.G."/>
            <person name="Dupree P."/>
        </authorList>
    </citation>
    <scope>DISRUPTION PHENOTYPE</scope>
</reference>
<reference key="5">
    <citation type="journal article" date="2014" name="Proc. Natl. Acad. Sci. U.S.A.">
        <title>The Golgi localized bifunctional UDP-rhamnose/UDP-galactose transporter family of Arabidopsis.</title>
        <authorList>
            <person name="Rautengarten C."/>
            <person name="Ebert B."/>
            <person name="Moreno I."/>
            <person name="Temple H."/>
            <person name="Herter T."/>
            <person name="Link B."/>
            <person name="Donas-Cofre D."/>
            <person name="Moreno A."/>
            <person name="Saez-Aguayo S."/>
            <person name="Blanco F."/>
            <person name="Mortimer J.C."/>
            <person name="Schultink A."/>
            <person name="Reiter W.D."/>
            <person name="Dupree P."/>
            <person name="Pauly M."/>
            <person name="Heazlewood J.L."/>
            <person name="Scheller H.V."/>
            <person name="Orellana A."/>
        </authorList>
    </citation>
    <scope>GENE FAMILY</scope>
</reference>
<reference key="6">
    <citation type="journal article" date="2016" name="Nat. Commun.">
        <title>The Arabidopsis Golgi-localized GDP-L-fucose transporter is required for plant development.</title>
        <authorList>
            <person name="Rautengarten C."/>
            <person name="Ebert B."/>
            <person name="Liu L."/>
            <person name="Stonebloom S."/>
            <person name="Smith-Moritz A.M."/>
            <person name="Pauly M."/>
            <person name="Orellana A."/>
            <person name="Scheller H.V."/>
            <person name="Heazlewood J.L."/>
        </authorList>
    </citation>
    <scope>SUBCELLULAR LOCATION</scope>
</reference>
<organism>
    <name type="scientific">Arabidopsis thaliana</name>
    <name type="common">Mouse-ear cress</name>
    <dbReference type="NCBI Taxonomy" id="3702"/>
    <lineage>
        <taxon>Eukaryota</taxon>
        <taxon>Viridiplantae</taxon>
        <taxon>Streptophyta</taxon>
        <taxon>Embryophyta</taxon>
        <taxon>Tracheophyta</taxon>
        <taxon>Spermatophyta</taxon>
        <taxon>Magnoliopsida</taxon>
        <taxon>eudicotyledons</taxon>
        <taxon>Gunneridae</taxon>
        <taxon>Pentapetalae</taxon>
        <taxon>rosids</taxon>
        <taxon>malvids</taxon>
        <taxon>Brassicales</taxon>
        <taxon>Brassicaceae</taxon>
        <taxon>Camelineae</taxon>
        <taxon>Arabidopsis</taxon>
    </lineage>
</organism>